<feature type="chain" id="PRO_1000018602" description="N-(5'-phosphoribosyl)anthranilate isomerase">
    <location>
        <begin position="1"/>
        <end position="207"/>
    </location>
</feature>
<comment type="catalytic activity">
    <reaction evidence="1">
        <text>N-(5-phospho-beta-D-ribosyl)anthranilate = 1-(2-carboxyphenylamino)-1-deoxy-D-ribulose 5-phosphate</text>
        <dbReference type="Rhea" id="RHEA:21540"/>
        <dbReference type="ChEBI" id="CHEBI:18277"/>
        <dbReference type="ChEBI" id="CHEBI:58613"/>
        <dbReference type="EC" id="5.3.1.24"/>
    </reaction>
</comment>
<comment type="pathway">
    <text evidence="1">Amino-acid biosynthesis; L-tryptophan biosynthesis; L-tryptophan from chorismate: step 3/5.</text>
</comment>
<comment type="similarity">
    <text evidence="1">Belongs to the TrpF family.</text>
</comment>
<keyword id="KW-0028">Amino-acid biosynthesis</keyword>
<keyword id="KW-0057">Aromatic amino acid biosynthesis</keyword>
<keyword id="KW-0413">Isomerase</keyword>
<keyword id="KW-0822">Tryptophan biosynthesis</keyword>
<accession>A5IBF6</accession>
<gene>
    <name evidence="1" type="primary">trpF</name>
    <name type="ordered locus">LPC_0728</name>
</gene>
<name>TRPF_LEGPC</name>
<dbReference type="EC" id="5.3.1.24" evidence="1"/>
<dbReference type="EMBL" id="CP000675">
    <property type="protein sequence ID" value="ABQ54706.1"/>
    <property type="molecule type" value="Genomic_DNA"/>
</dbReference>
<dbReference type="RefSeq" id="WP_011946350.1">
    <property type="nucleotide sequence ID" value="NZ_JAPMSS010000002.1"/>
</dbReference>
<dbReference type="SMR" id="A5IBF6"/>
<dbReference type="KEGG" id="lpc:LPC_0728"/>
<dbReference type="HOGENOM" id="CLU_076364_2_0_6"/>
<dbReference type="UniPathway" id="UPA00035">
    <property type="reaction ID" value="UER00042"/>
</dbReference>
<dbReference type="GO" id="GO:0004640">
    <property type="term" value="F:phosphoribosylanthranilate isomerase activity"/>
    <property type="evidence" value="ECO:0007669"/>
    <property type="project" value="UniProtKB-UniRule"/>
</dbReference>
<dbReference type="GO" id="GO:0000162">
    <property type="term" value="P:L-tryptophan biosynthetic process"/>
    <property type="evidence" value="ECO:0007669"/>
    <property type="project" value="UniProtKB-UniRule"/>
</dbReference>
<dbReference type="CDD" id="cd00405">
    <property type="entry name" value="PRAI"/>
    <property type="match status" value="1"/>
</dbReference>
<dbReference type="FunFam" id="3.20.20.70:FF:000075">
    <property type="entry name" value="Tryptophan biosynthesis protein TRP1"/>
    <property type="match status" value="1"/>
</dbReference>
<dbReference type="Gene3D" id="3.20.20.70">
    <property type="entry name" value="Aldolase class I"/>
    <property type="match status" value="1"/>
</dbReference>
<dbReference type="HAMAP" id="MF_00135">
    <property type="entry name" value="PRAI"/>
    <property type="match status" value="1"/>
</dbReference>
<dbReference type="InterPro" id="IPR013785">
    <property type="entry name" value="Aldolase_TIM"/>
</dbReference>
<dbReference type="InterPro" id="IPR001240">
    <property type="entry name" value="PRAI_dom"/>
</dbReference>
<dbReference type="InterPro" id="IPR011060">
    <property type="entry name" value="RibuloseP-bd_barrel"/>
</dbReference>
<dbReference type="InterPro" id="IPR044643">
    <property type="entry name" value="TrpF_fam"/>
</dbReference>
<dbReference type="NCBIfam" id="NF002298">
    <property type="entry name" value="PRK01222.1-4"/>
    <property type="match status" value="1"/>
</dbReference>
<dbReference type="PANTHER" id="PTHR42894">
    <property type="entry name" value="N-(5'-PHOSPHORIBOSYL)ANTHRANILATE ISOMERASE"/>
    <property type="match status" value="1"/>
</dbReference>
<dbReference type="PANTHER" id="PTHR42894:SF1">
    <property type="entry name" value="N-(5'-PHOSPHORIBOSYL)ANTHRANILATE ISOMERASE"/>
    <property type="match status" value="1"/>
</dbReference>
<dbReference type="Pfam" id="PF00697">
    <property type="entry name" value="PRAI"/>
    <property type="match status" value="1"/>
</dbReference>
<dbReference type="SUPFAM" id="SSF51366">
    <property type="entry name" value="Ribulose-phoshate binding barrel"/>
    <property type="match status" value="1"/>
</dbReference>
<sequence>MNPSRIRIKMCGMTRSEDIQCAIDLGVDAIGLIFYPKSARNVSLEKARIIVNNIPPFVDIVAVLVNPEQSFVQLIINEIPVQLLQFHGEESSEFCRQFNKPFIKAIHPKTAIQIQSAVDEFFDASAILLDTPSDKERGGTGLTFDWNIIPENLSKPYILAGGLNESNILEAITMCHPYAVDVCSGIEASPGVKDHLKMSRFIKAIWG</sequence>
<evidence type="ECO:0000255" key="1">
    <source>
        <dbReference type="HAMAP-Rule" id="MF_00135"/>
    </source>
</evidence>
<protein>
    <recommendedName>
        <fullName evidence="1">N-(5'-phosphoribosyl)anthranilate isomerase</fullName>
        <shortName evidence="1">PRAI</shortName>
        <ecNumber evidence="1">5.3.1.24</ecNumber>
    </recommendedName>
</protein>
<reference key="1">
    <citation type="submission" date="2006-11" db="EMBL/GenBank/DDBJ databases">
        <title>Identification and characterization of a new conjugation/ type IVA secretion system (trb/tra) of L. pneumophila Corby localized on a mobile genomic island.</title>
        <authorList>
            <person name="Gloeckner G."/>
            <person name="Albert-Weissenberger C."/>
            <person name="Weinmann E."/>
            <person name="Jacobi S."/>
            <person name="Schunder E."/>
            <person name="Steinert M."/>
            <person name="Buchrieser C."/>
            <person name="Hacker J."/>
            <person name="Heuner K."/>
        </authorList>
    </citation>
    <scope>NUCLEOTIDE SEQUENCE [LARGE SCALE GENOMIC DNA]</scope>
    <source>
        <strain>Corby</strain>
    </source>
</reference>
<organism>
    <name type="scientific">Legionella pneumophila (strain Corby)</name>
    <dbReference type="NCBI Taxonomy" id="400673"/>
    <lineage>
        <taxon>Bacteria</taxon>
        <taxon>Pseudomonadati</taxon>
        <taxon>Pseudomonadota</taxon>
        <taxon>Gammaproteobacteria</taxon>
        <taxon>Legionellales</taxon>
        <taxon>Legionellaceae</taxon>
        <taxon>Legionella</taxon>
    </lineage>
</organism>
<proteinExistence type="inferred from homology"/>